<reference key="1">
    <citation type="submission" date="2006-08" db="EMBL/GenBank/DDBJ databases">
        <title>Complete sequence of chromosome 1 of Burkholderia cepacia AMMD.</title>
        <authorList>
            <person name="Copeland A."/>
            <person name="Lucas S."/>
            <person name="Lapidus A."/>
            <person name="Barry K."/>
            <person name="Detter J.C."/>
            <person name="Glavina del Rio T."/>
            <person name="Hammon N."/>
            <person name="Israni S."/>
            <person name="Pitluck S."/>
            <person name="Bruce D."/>
            <person name="Chain P."/>
            <person name="Malfatti S."/>
            <person name="Shin M."/>
            <person name="Vergez L."/>
            <person name="Schmutz J."/>
            <person name="Larimer F."/>
            <person name="Land M."/>
            <person name="Hauser L."/>
            <person name="Kyrpides N."/>
            <person name="Kim E."/>
            <person name="Parke J."/>
            <person name="Coenye T."/>
            <person name="Konstantinidis K."/>
            <person name="Ramette A."/>
            <person name="Tiedje J."/>
            <person name="Richardson P."/>
        </authorList>
    </citation>
    <scope>NUCLEOTIDE SEQUENCE [LARGE SCALE GENOMIC DNA]</scope>
    <source>
        <strain>ATCC BAA-244 / DSM 16087 / CCUG 44356 / LMG 19182 / AMMD</strain>
    </source>
</reference>
<protein>
    <recommendedName>
        <fullName evidence="1">tRNA uridine(34) hydroxylase</fullName>
        <ecNumber evidence="1">1.14.-.-</ecNumber>
    </recommendedName>
    <alternativeName>
        <fullName evidence="1">tRNA hydroxylation protein O</fullName>
    </alternativeName>
</protein>
<feature type="chain" id="PRO_1000013727" description="tRNA uridine(34) hydroxylase">
    <location>
        <begin position="1"/>
        <end position="284"/>
    </location>
</feature>
<feature type="domain" description="Rhodanese" evidence="1">
    <location>
        <begin position="132"/>
        <end position="226"/>
    </location>
</feature>
<feature type="active site" description="Cysteine persulfide intermediate" evidence="1">
    <location>
        <position position="186"/>
    </location>
</feature>
<comment type="function">
    <text evidence="1">Catalyzes oxygen-dependent 5-hydroxyuridine (ho5U) modification at position 34 in tRNAs.</text>
</comment>
<comment type="catalytic activity">
    <reaction evidence="1">
        <text>uridine(34) in tRNA + AH2 + O2 = 5-hydroxyuridine(34) in tRNA + A + H2O</text>
        <dbReference type="Rhea" id="RHEA:64224"/>
        <dbReference type="Rhea" id="RHEA-COMP:11727"/>
        <dbReference type="Rhea" id="RHEA-COMP:13381"/>
        <dbReference type="ChEBI" id="CHEBI:13193"/>
        <dbReference type="ChEBI" id="CHEBI:15377"/>
        <dbReference type="ChEBI" id="CHEBI:15379"/>
        <dbReference type="ChEBI" id="CHEBI:17499"/>
        <dbReference type="ChEBI" id="CHEBI:65315"/>
        <dbReference type="ChEBI" id="CHEBI:136877"/>
    </reaction>
</comment>
<comment type="similarity">
    <text evidence="1">Belongs to the TrhO family.</text>
</comment>
<accession>Q0BD64</accession>
<evidence type="ECO:0000255" key="1">
    <source>
        <dbReference type="HAMAP-Rule" id="MF_00469"/>
    </source>
</evidence>
<keyword id="KW-0560">Oxidoreductase</keyword>
<keyword id="KW-0819">tRNA processing</keyword>
<sequence length="284" mass="31493">MTIVNLAAYHFVSIDATEQWRPLVTARCNELGLRGTILLAPEGINLFIAGPREATDAFIDYIRHDPLFEGKFATLQFKESLSDSQPFRRMLVRLKREIITMKKPAIKPELGRAPSVDARTLKAWLDRGHDDAGRPVVMLDTRNAFEVDVGTFDGALDYRIDKFSEFPEVIDANRADLEGRTVVSFCTGGIRCEKAAIHMKEIGIDNVYQLEGGILKYFEEVGGAHYHGDCFVFDYRTALNPQLQPTENVTCFACRAVVTPEAQQSPSYVPGKSCPACAQAASAA</sequence>
<organism>
    <name type="scientific">Burkholderia ambifaria (strain ATCC BAA-244 / DSM 16087 / CCUG 44356 / LMG 19182 / AMMD)</name>
    <name type="common">Burkholderia cepacia (strain AMMD)</name>
    <dbReference type="NCBI Taxonomy" id="339670"/>
    <lineage>
        <taxon>Bacteria</taxon>
        <taxon>Pseudomonadati</taxon>
        <taxon>Pseudomonadota</taxon>
        <taxon>Betaproteobacteria</taxon>
        <taxon>Burkholderiales</taxon>
        <taxon>Burkholderiaceae</taxon>
        <taxon>Burkholderia</taxon>
        <taxon>Burkholderia cepacia complex</taxon>
    </lineage>
</organism>
<name>TRHO_BURCM</name>
<dbReference type="EC" id="1.14.-.-" evidence="1"/>
<dbReference type="EMBL" id="CP000440">
    <property type="protein sequence ID" value="ABI87909.1"/>
    <property type="molecule type" value="Genomic_DNA"/>
</dbReference>
<dbReference type="RefSeq" id="WP_011657537.1">
    <property type="nucleotide sequence ID" value="NZ_CP009798.1"/>
</dbReference>
<dbReference type="SMR" id="Q0BD64"/>
<dbReference type="KEGG" id="bam:Bamb_2353"/>
<dbReference type="PATRIC" id="fig|339670.21.peg.2570"/>
<dbReference type="eggNOG" id="COG1054">
    <property type="taxonomic scope" value="Bacteria"/>
</dbReference>
<dbReference type="Proteomes" id="UP000000662">
    <property type="component" value="Chromosome 1"/>
</dbReference>
<dbReference type="GO" id="GO:0016705">
    <property type="term" value="F:oxidoreductase activity, acting on paired donors, with incorporation or reduction of molecular oxygen"/>
    <property type="evidence" value="ECO:0007669"/>
    <property type="project" value="UniProtKB-UniRule"/>
</dbReference>
<dbReference type="GO" id="GO:0006400">
    <property type="term" value="P:tRNA modification"/>
    <property type="evidence" value="ECO:0007669"/>
    <property type="project" value="UniProtKB-UniRule"/>
</dbReference>
<dbReference type="CDD" id="cd01518">
    <property type="entry name" value="RHOD_YceA"/>
    <property type="match status" value="1"/>
</dbReference>
<dbReference type="Gene3D" id="3.30.70.100">
    <property type="match status" value="1"/>
</dbReference>
<dbReference type="Gene3D" id="3.40.250.10">
    <property type="entry name" value="Rhodanese-like domain"/>
    <property type="match status" value="1"/>
</dbReference>
<dbReference type="HAMAP" id="MF_00469">
    <property type="entry name" value="TrhO"/>
    <property type="match status" value="1"/>
</dbReference>
<dbReference type="InterPro" id="IPR001763">
    <property type="entry name" value="Rhodanese-like_dom"/>
</dbReference>
<dbReference type="InterPro" id="IPR036873">
    <property type="entry name" value="Rhodanese-like_dom_sf"/>
</dbReference>
<dbReference type="InterPro" id="IPR020936">
    <property type="entry name" value="TrhO"/>
</dbReference>
<dbReference type="InterPro" id="IPR040503">
    <property type="entry name" value="TRHO_N"/>
</dbReference>
<dbReference type="NCBIfam" id="NF003703">
    <property type="entry name" value="PRK05320.1"/>
    <property type="match status" value="1"/>
</dbReference>
<dbReference type="PANTHER" id="PTHR43268:SF3">
    <property type="entry name" value="RHODANESE-LIKE DOMAIN-CONTAINING PROTEIN 7-RELATED"/>
    <property type="match status" value="1"/>
</dbReference>
<dbReference type="PANTHER" id="PTHR43268">
    <property type="entry name" value="THIOSULFATE SULFURTRANSFERASE/RHODANESE-LIKE DOMAIN-CONTAINING PROTEIN 2"/>
    <property type="match status" value="1"/>
</dbReference>
<dbReference type="Pfam" id="PF00581">
    <property type="entry name" value="Rhodanese"/>
    <property type="match status" value="1"/>
</dbReference>
<dbReference type="Pfam" id="PF17773">
    <property type="entry name" value="UPF0176_N"/>
    <property type="match status" value="1"/>
</dbReference>
<dbReference type="SMART" id="SM00450">
    <property type="entry name" value="RHOD"/>
    <property type="match status" value="1"/>
</dbReference>
<dbReference type="SUPFAM" id="SSF52821">
    <property type="entry name" value="Rhodanese/Cell cycle control phosphatase"/>
    <property type="match status" value="1"/>
</dbReference>
<dbReference type="PROSITE" id="PS50206">
    <property type="entry name" value="RHODANESE_3"/>
    <property type="match status" value="1"/>
</dbReference>
<proteinExistence type="inferred from homology"/>
<gene>
    <name evidence="1" type="primary">trhO</name>
    <name type="ordered locus">Bamb_2353</name>
</gene>